<proteinExistence type="evidence at transcript level"/>
<dbReference type="EMBL" id="BC041309">
    <property type="protein sequence ID" value="AAH41309.1"/>
    <property type="molecule type" value="mRNA"/>
</dbReference>
<dbReference type="EMBL" id="BC044078">
    <property type="protein sequence ID" value="AAH44078.1"/>
    <property type="molecule type" value="mRNA"/>
</dbReference>
<dbReference type="EMBL" id="BC108489">
    <property type="protein sequence ID" value="AAI08490.1"/>
    <property type="molecule type" value="mRNA"/>
</dbReference>
<dbReference type="RefSeq" id="NP_001082428.1">
    <property type="nucleotide sequence ID" value="NM_001088959.1"/>
</dbReference>
<dbReference type="SMR" id="Q32NT4"/>
<dbReference type="DNASU" id="398462"/>
<dbReference type="GeneID" id="398462"/>
<dbReference type="KEGG" id="xla:398462"/>
<dbReference type="AGR" id="Xenbase:XB-GENE-963291"/>
<dbReference type="CTD" id="398462"/>
<dbReference type="Xenbase" id="XB-GENE-963291">
    <property type="gene designation" value="lrrc58.S"/>
</dbReference>
<dbReference type="OMA" id="ANGHCEG"/>
<dbReference type="OrthoDB" id="1053178at2759"/>
<dbReference type="Proteomes" id="UP000186698">
    <property type="component" value="Chromosome 2S"/>
</dbReference>
<dbReference type="Bgee" id="398462">
    <property type="expression patterns" value="Expressed in egg cell and 19 other cell types or tissues"/>
</dbReference>
<dbReference type="GO" id="GO:0005737">
    <property type="term" value="C:cytoplasm"/>
    <property type="evidence" value="ECO:0000318"/>
    <property type="project" value="GO_Central"/>
</dbReference>
<dbReference type="Gene3D" id="3.80.10.10">
    <property type="entry name" value="Ribonuclease Inhibitor"/>
    <property type="match status" value="2"/>
</dbReference>
<dbReference type="InterPro" id="IPR001611">
    <property type="entry name" value="Leu-rich_rpt"/>
</dbReference>
<dbReference type="InterPro" id="IPR003591">
    <property type="entry name" value="Leu-rich_rpt_typical-subtyp"/>
</dbReference>
<dbReference type="InterPro" id="IPR032675">
    <property type="entry name" value="LRR_dom_sf"/>
</dbReference>
<dbReference type="InterPro" id="IPR050216">
    <property type="entry name" value="LRR_domain-containing"/>
</dbReference>
<dbReference type="PANTHER" id="PTHR48051">
    <property type="match status" value="1"/>
</dbReference>
<dbReference type="PANTHER" id="PTHR48051:SF53">
    <property type="entry name" value="LEUCINE RICH REPEAT CONTAINING 58"/>
    <property type="match status" value="1"/>
</dbReference>
<dbReference type="Pfam" id="PF13855">
    <property type="entry name" value="LRR_8"/>
    <property type="match status" value="2"/>
</dbReference>
<dbReference type="SMART" id="SM00369">
    <property type="entry name" value="LRR_TYP"/>
    <property type="match status" value="6"/>
</dbReference>
<dbReference type="SUPFAM" id="SSF52058">
    <property type="entry name" value="L domain-like"/>
    <property type="match status" value="1"/>
</dbReference>
<dbReference type="PROSITE" id="PS51450">
    <property type="entry name" value="LRR"/>
    <property type="match status" value="7"/>
</dbReference>
<reference key="1">
    <citation type="submission" date="2005-11" db="EMBL/GenBank/DDBJ databases">
        <authorList>
            <consortium name="NIH - Xenopus Gene Collection (XGC) project"/>
        </authorList>
    </citation>
    <scope>NUCLEOTIDE SEQUENCE [LARGE SCALE MRNA]</scope>
    <source>
        <tissue>Embryo</tissue>
    </source>
</reference>
<feature type="chain" id="PRO_0000312019" description="Leucine-rich repeat-containing protein 58">
    <location>
        <begin position="1"/>
        <end position="350"/>
    </location>
</feature>
<feature type="repeat" description="LRR 1">
    <location>
        <begin position="14"/>
        <end position="34"/>
    </location>
</feature>
<feature type="repeat" description="LRR 2">
    <location>
        <begin position="35"/>
        <end position="56"/>
    </location>
</feature>
<feature type="repeat" description="LRR 3">
    <location>
        <begin position="58"/>
        <end position="80"/>
    </location>
</feature>
<feature type="repeat" description="LRR 4">
    <location>
        <begin position="81"/>
        <end position="102"/>
    </location>
</feature>
<feature type="repeat" description="LRR 5">
    <location>
        <begin position="105"/>
        <end position="125"/>
    </location>
</feature>
<feature type="repeat" description="LRR 6">
    <location>
        <begin position="128"/>
        <end position="149"/>
    </location>
</feature>
<feature type="repeat" description="LRR 7">
    <location>
        <begin position="151"/>
        <end position="173"/>
    </location>
</feature>
<feature type="repeat" description="LRR 8">
    <location>
        <begin position="174"/>
        <end position="195"/>
    </location>
</feature>
<feature type="repeat" description="LRR 9">
    <location>
        <begin position="197"/>
        <end position="218"/>
    </location>
</feature>
<feature type="repeat" description="LRR 10">
    <location>
        <begin position="220"/>
        <end position="240"/>
    </location>
</feature>
<gene>
    <name type="primary">lrrc58</name>
</gene>
<keyword id="KW-0433">Leucine-rich repeat</keyword>
<keyword id="KW-1185">Reference proteome</keyword>
<keyword id="KW-0677">Repeat</keyword>
<name>LRC58_XENLA</name>
<accession>Q32NT4</accession>
<accession>Q7ZSY7</accession>
<protein>
    <recommendedName>
        <fullName>Leucine-rich repeat-containing protein 58</fullName>
    </recommendedName>
</protein>
<sequence>MEGPEVTDGDNVLNLTHLGLENLNLELVSENKRKDVQQILLPHNRLVVLPPLVASFIHLHLLDISNNNMVYIGEEILGLTKLKTLLAKNNRLDEFSFPKEMGGMRLEVLNLSGNRFEEIPDQFLQIPTLKSLSLGGNRLKSIPAEIENLISLEFLYLGGNFISSIPSELANLPYLSYLVLCDNRIQSIPPQLAQVHSLRSLSLHNNLLTYLPREILSLVHLHELSLRGNPLVVRFVRDLTYTPPTLLELAGRTIKSHGIPYCPWELPENLLRYLDLASKCPNPKCSGVYFDCCVRQIKFVDFCGKYRLPLMHYLCSPECSSPCGSTSHSESDSEDEVNVAARRMQKVLLG</sequence>
<organism>
    <name type="scientific">Xenopus laevis</name>
    <name type="common">African clawed frog</name>
    <dbReference type="NCBI Taxonomy" id="8355"/>
    <lineage>
        <taxon>Eukaryota</taxon>
        <taxon>Metazoa</taxon>
        <taxon>Chordata</taxon>
        <taxon>Craniata</taxon>
        <taxon>Vertebrata</taxon>
        <taxon>Euteleostomi</taxon>
        <taxon>Amphibia</taxon>
        <taxon>Batrachia</taxon>
        <taxon>Anura</taxon>
        <taxon>Pipoidea</taxon>
        <taxon>Pipidae</taxon>
        <taxon>Xenopodinae</taxon>
        <taxon>Xenopus</taxon>
        <taxon>Xenopus</taxon>
    </lineage>
</organism>